<proteinExistence type="inferred from homology"/>
<gene>
    <name evidence="1" type="primary">rsgA</name>
    <name type="ordered locus">MYPU_6840</name>
</gene>
<keyword id="KW-0963">Cytoplasm</keyword>
<keyword id="KW-0342">GTP-binding</keyword>
<keyword id="KW-0378">Hydrolase</keyword>
<keyword id="KW-0479">Metal-binding</keyword>
<keyword id="KW-0547">Nucleotide-binding</keyword>
<keyword id="KW-1185">Reference proteome</keyword>
<keyword id="KW-0690">Ribosome biogenesis</keyword>
<keyword id="KW-0694">RNA-binding</keyword>
<keyword id="KW-0699">rRNA-binding</keyword>
<keyword id="KW-0862">Zinc</keyword>
<accession>Q98PN8</accession>
<feature type="chain" id="PRO_0000171497" description="Small ribosomal subunit biogenesis GTPase RsgA">
    <location>
        <begin position="1"/>
        <end position="272"/>
    </location>
</feature>
<feature type="domain" description="CP-type G" evidence="2">
    <location>
        <begin position="56"/>
        <end position="207"/>
    </location>
</feature>
<feature type="binding site" evidence="1">
    <location>
        <begin position="105"/>
        <end position="108"/>
    </location>
    <ligand>
        <name>GTP</name>
        <dbReference type="ChEBI" id="CHEBI:37565"/>
    </ligand>
</feature>
<feature type="binding site" evidence="1">
    <location>
        <begin position="151"/>
        <end position="159"/>
    </location>
    <ligand>
        <name>GTP</name>
        <dbReference type="ChEBI" id="CHEBI:37565"/>
    </ligand>
</feature>
<feature type="binding site" evidence="1">
    <location>
        <position position="230"/>
    </location>
    <ligand>
        <name>Zn(2+)</name>
        <dbReference type="ChEBI" id="CHEBI:29105"/>
    </ligand>
</feature>
<feature type="binding site" evidence="1">
    <location>
        <position position="235"/>
    </location>
    <ligand>
        <name>Zn(2+)</name>
        <dbReference type="ChEBI" id="CHEBI:29105"/>
    </ligand>
</feature>
<feature type="binding site" evidence="1">
    <location>
        <position position="237"/>
    </location>
    <ligand>
        <name>Zn(2+)</name>
        <dbReference type="ChEBI" id="CHEBI:29105"/>
    </ligand>
</feature>
<feature type="binding site" evidence="1">
    <location>
        <position position="245"/>
    </location>
    <ligand>
        <name>Zn(2+)</name>
        <dbReference type="ChEBI" id="CHEBI:29105"/>
    </ligand>
</feature>
<evidence type="ECO:0000255" key="1">
    <source>
        <dbReference type="HAMAP-Rule" id="MF_01820"/>
    </source>
</evidence>
<evidence type="ECO:0000255" key="2">
    <source>
        <dbReference type="PROSITE-ProRule" id="PRU01058"/>
    </source>
</evidence>
<organism>
    <name type="scientific">Mycoplasmopsis pulmonis (strain UAB CTIP)</name>
    <name type="common">Mycoplasma pulmonis</name>
    <dbReference type="NCBI Taxonomy" id="272635"/>
    <lineage>
        <taxon>Bacteria</taxon>
        <taxon>Bacillati</taxon>
        <taxon>Mycoplasmatota</taxon>
        <taxon>Mycoplasmoidales</taxon>
        <taxon>Metamycoplasmataceae</taxon>
        <taxon>Mycoplasmopsis</taxon>
    </lineage>
</organism>
<protein>
    <recommendedName>
        <fullName evidence="1">Small ribosomal subunit biogenesis GTPase RsgA</fullName>
        <ecNumber evidence="1">3.6.1.-</ecNumber>
    </recommendedName>
</protein>
<dbReference type="EC" id="3.6.1.-" evidence="1"/>
<dbReference type="EMBL" id="AL445565">
    <property type="protein sequence ID" value="CAC13857.1"/>
    <property type="molecule type" value="Genomic_DNA"/>
</dbReference>
<dbReference type="PIR" id="D90597">
    <property type="entry name" value="D90597"/>
</dbReference>
<dbReference type="RefSeq" id="WP_010925485.1">
    <property type="nucleotide sequence ID" value="NC_002771.1"/>
</dbReference>
<dbReference type="SMR" id="Q98PN8"/>
<dbReference type="STRING" id="272635.gene:17577295"/>
<dbReference type="KEGG" id="mpu:MYPU_6840"/>
<dbReference type="eggNOG" id="COG1162">
    <property type="taxonomic scope" value="Bacteria"/>
</dbReference>
<dbReference type="HOGENOM" id="CLU_033617_2_1_14"/>
<dbReference type="BioCyc" id="MPUL272635:G1GT6-698-MONOMER"/>
<dbReference type="Proteomes" id="UP000000528">
    <property type="component" value="Chromosome"/>
</dbReference>
<dbReference type="GO" id="GO:0005737">
    <property type="term" value="C:cytoplasm"/>
    <property type="evidence" value="ECO:0007669"/>
    <property type="project" value="UniProtKB-SubCell"/>
</dbReference>
<dbReference type="GO" id="GO:0005525">
    <property type="term" value="F:GTP binding"/>
    <property type="evidence" value="ECO:0007669"/>
    <property type="project" value="UniProtKB-UniRule"/>
</dbReference>
<dbReference type="GO" id="GO:0003924">
    <property type="term" value="F:GTPase activity"/>
    <property type="evidence" value="ECO:0007669"/>
    <property type="project" value="UniProtKB-UniRule"/>
</dbReference>
<dbReference type="GO" id="GO:0046872">
    <property type="term" value="F:metal ion binding"/>
    <property type="evidence" value="ECO:0007669"/>
    <property type="project" value="UniProtKB-KW"/>
</dbReference>
<dbReference type="GO" id="GO:0019843">
    <property type="term" value="F:rRNA binding"/>
    <property type="evidence" value="ECO:0007669"/>
    <property type="project" value="UniProtKB-KW"/>
</dbReference>
<dbReference type="GO" id="GO:0042274">
    <property type="term" value="P:ribosomal small subunit biogenesis"/>
    <property type="evidence" value="ECO:0007669"/>
    <property type="project" value="UniProtKB-UniRule"/>
</dbReference>
<dbReference type="CDD" id="cd01854">
    <property type="entry name" value="YjeQ_EngC"/>
    <property type="match status" value="1"/>
</dbReference>
<dbReference type="Gene3D" id="2.40.50.140">
    <property type="entry name" value="Nucleic acid-binding proteins"/>
    <property type="match status" value="1"/>
</dbReference>
<dbReference type="Gene3D" id="3.40.50.300">
    <property type="entry name" value="P-loop containing nucleotide triphosphate hydrolases"/>
    <property type="match status" value="1"/>
</dbReference>
<dbReference type="Gene3D" id="1.10.40.50">
    <property type="entry name" value="Probable gtpase engc, domain 3"/>
    <property type="match status" value="1"/>
</dbReference>
<dbReference type="HAMAP" id="MF_01820">
    <property type="entry name" value="GTPase_RsgA"/>
    <property type="match status" value="1"/>
</dbReference>
<dbReference type="InterPro" id="IPR030378">
    <property type="entry name" value="G_CP_dom"/>
</dbReference>
<dbReference type="InterPro" id="IPR012340">
    <property type="entry name" value="NA-bd_OB-fold"/>
</dbReference>
<dbReference type="InterPro" id="IPR027417">
    <property type="entry name" value="P-loop_NTPase"/>
</dbReference>
<dbReference type="InterPro" id="IPR004881">
    <property type="entry name" value="Ribosome_biogen_GTPase_RsgA"/>
</dbReference>
<dbReference type="InterPro" id="IPR010914">
    <property type="entry name" value="RsgA_GTPase_dom"/>
</dbReference>
<dbReference type="InterPro" id="IPR031944">
    <property type="entry name" value="RsgA_N"/>
</dbReference>
<dbReference type="NCBIfam" id="TIGR00157">
    <property type="entry name" value="ribosome small subunit-dependent GTPase A"/>
    <property type="match status" value="1"/>
</dbReference>
<dbReference type="PANTHER" id="PTHR32120">
    <property type="entry name" value="SMALL RIBOSOMAL SUBUNIT BIOGENESIS GTPASE RSGA"/>
    <property type="match status" value="1"/>
</dbReference>
<dbReference type="PANTHER" id="PTHR32120:SF11">
    <property type="entry name" value="SMALL RIBOSOMAL SUBUNIT BIOGENESIS GTPASE RSGA 1, MITOCHONDRIAL-RELATED"/>
    <property type="match status" value="1"/>
</dbReference>
<dbReference type="Pfam" id="PF03193">
    <property type="entry name" value="RsgA_GTPase"/>
    <property type="match status" value="1"/>
</dbReference>
<dbReference type="Pfam" id="PF16745">
    <property type="entry name" value="RsgA_N"/>
    <property type="match status" value="1"/>
</dbReference>
<dbReference type="SUPFAM" id="SSF50249">
    <property type="entry name" value="Nucleic acid-binding proteins"/>
    <property type="match status" value="1"/>
</dbReference>
<dbReference type="SUPFAM" id="SSF52540">
    <property type="entry name" value="P-loop containing nucleoside triphosphate hydrolases"/>
    <property type="match status" value="1"/>
</dbReference>
<dbReference type="PROSITE" id="PS50936">
    <property type="entry name" value="ENGC_GTPASE"/>
    <property type="match status" value="1"/>
</dbReference>
<dbReference type="PROSITE" id="PS51721">
    <property type="entry name" value="G_CP"/>
    <property type="match status" value="1"/>
</dbReference>
<name>RSGA_MYCPU</name>
<comment type="function">
    <text evidence="1">One of several proteins that assist in the late maturation steps of the functional core of the 30S ribosomal subunit. Helps release RbfA from mature subunits. May play a role in the assembly of ribosomal proteins into the subunit. Circularly permuted GTPase that catalyzes slow GTP hydrolysis, GTPase activity is stimulated by the 30S ribosomal subunit.</text>
</comment>
<comment type="cofactor">
    <cofactor evidence="1">
        <name>Zn(2+)</name>
        <dbReference type="ChEBI" id="CHEBI:29105"/>
    </cofactor>
    <text evidence="1">Binds 1 zinc ion per subunit.</text>
</comment>
<comment type="subunit">
    <text evidence="1">Monomer. Associates with 30S ribosomal subunit, binds 16S rRNA.</text>
</comment>
<comment type="subcellular location">
    <subcellularLocation>
        <location evidence="1">Cytoplasm</location>
    </subcellularLocation>
</comment>
<comment type="similarity">
    <text evidence="1">Belongs to the TRAFAC class YlqF/YawG GTPase family. RsgA subfamily.</text>
</comment>
<reference key="1">
    <citation type="journal article" date="2001" name="Nucleic Acids Res.">
        <title>The complete genome sequence of the murine respiratory pathogen Mycoplasma pulmonis.</title>
        <authorList>
            <person name="Chambaud I."/>
            <person name="Heilig R."/>
            <person name="Ferris S."/>
            <person name="Barbe V."/>
            <person name="Samson D."/>
            <person name="Galisson F."/>
            <person name="Moszer I."/>
            <person name="Dybvig K."/>
            <person name="Wroblewski H."/>
            <person name="Viari A."/>
            <person name="Rocha E.P.C."/>
            <person name="Blanchard A."/>
        </authorList>
    </citation>
    <scope>NUCLEOTIDE SEQUENCE [LARGE SCALE GENOMIC DNA]</scope>
    <source>
        <strain>UAB CTIP</strain>
    </source>
</reference>
<sequence>MIGRVYQVISGFYDIKCEDKFYRVRAIGNLRNLKLNPVVGDLVVFDESLTKIEPRKNILIRPKVANIDQAIIVISLDQPKFSSFLLDKFLSIIEFQKIKVVIIFTKADLNTKEDIGYYLKTYQSYLTSLDDENSYKKLNDIFEKKISVLVGQSGVGKTTILNKVSLNNFFTQNISKALGRGKHSTRVVKMIDFNNGQIIDTPGFSSIEIQMSQKDLSKSFESFDKYSQRCKYRHCLHQNERLEDCNIKQLVQSQEIPLFRYNNYLKLLDEVK</sequence>